<evidence type="ECO:0000255" key="1"/>
<evidence type="ECO:0000305" key="2"/>
<proteinExistence type="inferred from homology"/>
<sequence length="65" mass="6867">MISTSSILILVFLLACFMATSAQWGYGGYGRGYGGYGGYGRGMYGGYGRGMYGGYGRGMYGGWGK</sequence>
<reference key="1">
    <citation type="journal article" date="1998" name="Science">
        <title>Genome sequence of the nematode C. elegans: a platform for investigating biology.</title>
        <authorList>
            <consortium name="The C. elegans sequencing consortium"/>
        </authorList>
    </citation>
    <scope>NUCLEOTIDE SEQUENCE [LARGE SCALE GENOMIC DNA]</scope>
    <source>
        <strain>Bristol N2</strain>
    </source>
</reference>
<reference key="2">
    <citation type="journal article" date="2001" name="Proc. Natl. Acad. Sci. U.S.A.">
        <title>Identification of neuropeptide-like protein gene families in Caenorhabditis elegans and other species.</title>
        <authorList>
            <person name="Nathoo A.N."/>
            <person name="Moeller R.A."/>
            <person name="Westlund B.A."/>
            <person name="Hart A.C."/>
        </authorList>
    </citation>
    <scope>IDENTIFICATION</scope>
</reference>
<name>NLP28_CAEEL</name>
<protein>
    <recommendedName>
        <fullName>Neuropeptide-like protein 28</fullName>
    </recommendedName>
    <component>
        <recommendedName>
            <fullName>QWGYGGY-amide</fullName>
        </recommendedName>
    </component>
    <component>
        <recommendedName>
            <fullName>GYGGYGGY-amide</fullName>
        </recommendedName>
    </component>
    <component>
        <recommendedName>
            <fullName>GMYGGY-amide</fullName>
        </recommendedName>
    </component>
    <component>
        <recommendedName>
            <fullName>GMYGGW-amide</fullName>
        </recommendedName>
    </component>
</protein>
<keyword id="KW-0027">Amidation</keyword>
<keyword id="KW-0165">Cleavage on pair of basic residues</keyword>
<keyword id="KW-0527">Neuropeptide</keyword>
<keyword id="KW-1185">Reference proteome</keyword>
<keyword id="KW-0677">Repeat</keyword>
<keyword id="KW-0964">Secreted</keyword>
<keyword id="KW-0732">Signal</keyword>
<organism>
    <name type="scientific">Caenorhabditis elegans</name>
    <dbReference type="NCBI Taxonomy" id="6239"/>
    <lineage>
        <taxon>Eukaryota</taxon>
        <taxon>Metazoa</taxon>
        <taxon>Ecdysozoa</taxon>
        <taxon>Nematoda</taxon>
        <taxon>Chromadorea</taxon>
        <taxon>Rhabditida</taxon>
        <taxon>Rhabditina</taxon>
        <taxon>Rhabditomorpha</taxon>
        <taxon>Rhabditoidea</taxon>
        <taxon>Rhabditidae</taxon>
        <taxon>Peloderinae</taxon>
        <taxon>Caenorhabditis</taxon>
    </lineage>
</organism>
<feature type="signal peptide" evidence="1">
    <location>
        <begin position="1"/>
        <end position="22"/>
    </location>
</feature>
<feature type="peptide" id="PRO_0000041488" description="QWGYGGY-amide" evidence="1">
    <location>
        <begin position="23"/>
        <end position="29"/>
    </location>
</feature>
<feature type="peptide" id="PRO_0000041489" description="GYGGYGGY-amide" evidence="1">
    <location>
        <begin position="32"/>
        <end position="39"/>
    </location>
</feature>
<feature type="peptide" id="PRO_0000041490" description="GMYGGY-amide" evidence="1">
    <location>
        <begin position="42"/>
        <end position="47"/>
    </location>
</feature>
<feature type="peptide" id="PRO_0000041491" description="GMYGGY-amide" evidence="1">
    <location>
        <begin position="50"/>
        <end position="55"/>
    </location>
</feature>
<feature type="peptide" id="PRO_0000041492" description="GMYGGW-amide" evidence="1">
    <location>
        <begin position="58"/>
        <end position="63"/>
    </location>
</feature>
<feature type="modified residue" description="Tyrosine amide" evidence="1">
    <location>
        <position position="29"/>
    </location>
</feature>
<feature type="modified residue" description="Tyrosine amide" evidence="1">
    <location>
        <position position="39"/>
    </location>
</feature>
<feature type="modified residue" description="Tyrosine amide" evidence="1">
    <location>
        <position position="47"/>
    </location>
</feature>
<feature type="modified residue" description="Tyrosine amide" evidence="1">
    <location>
        <position position="55"/>
    </location>
</feature>
<feature type="modified residue" description="Tryptophan amide" evidence="1">
    <location>
        <position position="63"/>
    </location>
</feature>
<gene>
    <name type="primary">nlp-28</name>
    <name type="ORF">B0213.3</name>
</gene>
<accession>O44665</accession>
<comment type="function">
    <text>May have antimicrobial activity.</text>
</comment>
<comment type="subcellular location">
    <subcellularLocation>
        <location evidence="2">Secreted</location>
    </subcellularLocation>
</comment>
<comment type="similarity">
    <text evidence="2">Belongs to the YARP (YGGW-amide related peptide) family.</text>
</comment>
<dbReference type="EMBL" id="FO080121">
    <property type="protein sequence ID" value="CCD61353.1"/>
    <property type="molecule type" value="Genomic_DNA"/>
</dbReference>
<dbReference type="PIR" id="D89016">
    <property type="entry name" value="D89016"/>
</dbReference>
<dbReference type="RefSeq" id="NP_504110.1">
    <property type="nucleotide sequence ID" value="NM_071709.6"/>
</dbReference>
<dbReference type="BioGRID" id="46713">
    <property type="interactions" value="1"/>
</dbReference>
<dbReference type="FunCoup" id="O44665">
    <property type="interactions" value="127"/>
</dbReference>
<dbReference type="STRING" id="6239.B0213.3.1"/>
<dbReference type="PaxDb" id="6239-B0213.3"/>
<dbReference type="EnsemblMetazoa" id="B0213.3.1">
    <property type="protein sequence ID" value="B0213.3.1"/>
    <property type="gene ID" value="WBGene00003766"/>
</dbReference>
<dbReference type="GeneID" id="181845"/>
<dbReference type="KEGG" id="cel:CELE_B0213.3"/>
<dbReference type="UCSC" id="B0213.3">
    <property type="organism name" value="c. elegans"/>
</dbReference>
<dbReference type="AGR" id="WB:WBGene00003766"/>
<dbReference type="CTD" id="181845"/>
<dbReference type="WormBase" id="B0213.3">
    <property type="protein sequence ID" value="CE16774"/>
    <property type="gene ID" value="WBGene00003766"/>
    <property type="gene designation" value="nlp-28"/>
</dbReference>
<dbReference type="HOGENOM" id="CLU_193227_0_0_1"/>
<dbReference type="InParanoid" id="O44665"/>
<dbReference type="OMA" id="MATSAQW"/>
<dbReference type="PRO" id="PR:O44665"/>
<dbReference type="Proteomes" id="UP000001940">
    <property type="component" value="Chromosome V"/>
</dbReference>
<dbReference type="Bgee" id="WBGene00003766">
    <property type="expression patterns" value="Expressed in adult organism and 3 other cell types or tissues"/>
</dbReference>
<dbReference type="GO" id="GO:0005576">
    <property type="term" value="C:extracellular region"/>
    <property type="evidence" value="ECO:0007669"/>
    <property type="project" value="UniProtKB-SubCell"/>
</dbReference>
<dbReference type="GO" id="GO:0036498">
    <property type="term" value="P:IRE1-mediated unfolded protein response"/>
    <property type="evidence" value="ECO:0007007"/>
    <property type="project" value="WormBase"/>
</dbReference>
<dbReference type="GO" id="GO:0007218">
    <property type="term" value="P:neuropeptide signaling pathway"/>
    <property type="evidence" value="ECO:0007669"/>
    <property type="project" value="UniProtKB-KW"/>
</dbReference>